<feature type="chain" id="PRO_0000412836" description="Beta-amyrin 24-hydroxylase">
    <location>
        <begin position="1"/>
        <end position="513"/>
    </location>
</feature>
<feature type="transmembrane region" description="Helical; Signal-anchor" evidence="2">
    <location>
        <begin position="1"/>
        <end position="21"/>
    </location>
</feature>
<feature type="binding site" description="axial binding residue" evidence="1">
    <location>
        <position position="451"/>
    </location>
    <ligand>
        <name>heme</name>
        <dbReference type="ChEBI" id="CHEBI:30413"/>
    </ligand>
    <ligandPart>
        <name>Fe</name>
        <dbReference type="ChEBI" id="CHEBI:18248"/>
    </ligandPart>
</feature>
<feature type="sequence conflict" description="In Ref. 2; BAE94181." evidence="4" ref="2">
    <original>I</original>
    <variation>V</variation>
    <location>
        <position position="41"/>
    </location>
</feature>
<feature type="sequence conflict" description="In Ref. 2; BAE94181." evidence="4" ref="2">
    <original>V</original>
    <variation>L</variation>
    <location>
        <position position="361"/>
    </location>
</feature>
<reference key="1">
    <citation type="journal article" date="1999" name="Arch. Biochem. Biophys.">
        <title>Molecular characterization of the enzyme catalyzing the aryl migration reaction of isoflavonoid biosynthesis in soybean.</title>
        <authorList>
            <person name="Steele C.L."/>
            <person name="Gijzen M."/>
            <person name="Qutob D."/>
            <person name="Dixon R.A."/>
        </authorList>
    </citation>
    <scope>NUCLEOTIDE SEQUENCE [MRNA]</scope>
</reference>
<reference key="2">
    <citation type="journal article" date="2006" name="FEBS J.">
        <title>Identification of beta-amyrin and sophoradiol 24-hydroxylase by expressed sequence tag mining and functional expression assay.</title>
        <authorList>
            <person name="Shibuya M."/>
            <person name="Hoshino M."/>
            <person name="Katsube Y."/>
            <person name="Hayashi H."/>
            <person name="Kushiro T."/>
            <person name="Ebizuka Y."/>
        </authorList>
    </citation>
    <scope>NUCLEOTIDE SEQUENCE [MRNA]</scope>
    <scope>FUNCTION</scope>
    <scope>CATALYTIC ACTIVITY</scope>
</reference>
<organism>
    <name type="scientific">Glycine max</name>
    <name type="common">Soybean</name>
    <name type="synonym">Glycine hispida</name>
    <dbReference type="NCBI Taxonomy" id="3847"/>
    <lineage>
        <taxon>Eukaryota</taxon>
        <taxon>Viridiplantae</taxon>
        <taxon>Streptophyta</taxon>
        <taxon>Embryophyta</taxon>
        <taxon>Tracheophyta</taxon>
        <taxon>Spermatophyta</taxon>
        <taxon>Magnoliopsida</taxon>
        <taxon>eudicotyledons</taxon>
        <taxon>Gunneridae</taxon>
        <taxon>Pentapetalae</taxon>
        <taxon>rosids</taxon>
        <taxon>fabids</taxon>
        <taxon>Fabales</taxon>
        <taxon>Fabaceae</taxon>
        <taxon>Papilionoideae</taxon>
        <taxon>50 kb inversion clade</taxon>
        <taxon>NPAAA clade</taxon>
        <taxon>indigoferoid/millettioid clade</taxon>
        <taxon>Phaseoleae</taxon>
        <taxon>Glycine</taxon>
        <taxon>Glycine subgen. Soja</taxon>
    </lineage>
</organism>
<evidence type="ECO:0000250" key="1"/>
<evidence type="ECO:0000255" key="2"/>
<evidence type="ECO:0000269" key="3">
    <source>
    </source>
</evidence>
<evidence type="ECO:0000305" key="4"/>
<sequence length="513" mass="58262">MLDIKGYLVLFFLWFISTILIRSIFKKPQRLRLPPGPPISIPLLGHAPYLRSLLHQALYKLSLRYGPLIHVMIGSKHVVVASSAETAKQILKTSEEAFCNRPLMIASESLTYGAADYFFIPYGTYWRFLKKLCMTELLSGKTLEHFVRIRESEVEAFLKRMMEISGNGNYEVVMRKELITHTNNIITRMIMGKKSNAENDEVARLRKVVREVGELLGAFNLGDVIGFMRPLDLQGFGKKNMETHHKVDAMMEKVLREHEEARAKEDADSDRKKDLFDILLNLIEADGADNKLTRESAKAFALDMFIAGTNGPASVLEWSLAELVRNPHVFKKAREEIESVVGKERLVKESDIPNLPYLQAVLKETLRLHPPTPIFAREAMRTCQVEGYDIPENSTILISTWAIGRDPNYWDDALEYKPERFLFSDDPGKSKIDVRGQYYQLLPFGSGRRSCPGASLALLVMQATLASLIQCFDWIVNDGKNHHVDMSEEGRVTVFLAKPLKCKPVPRFTPFAA</sequence>
<gene>
    <name type="primary">CYP93E1</name>
</gene>
<proteinExistence type="evidence at protein level"/>
<protein>
    <recommendedName>
        <fullName>Beta-amyrin 24-hydroxylase</fullName>
        <ecNumber evidence="3">1.14.14.134</ecNumber>
    </recommendedName>
    <alternativeName>
        <fullName>Cytochrome P450 93E1</fullName>
    </alternativeName>
    <alternativeName>
        <fullName>Sophoradiol 24-hydroxylase</fullName>
    </alternativeName>
</protein>
<keyword id="KW-0349">Heme</keyword>
<keyword id="KW-0408">Iron</keyword>
<keyword id="KW-0472">Membrane</keyword>
<keyword id="KW-0479">Metal-binding</keyword>
<keyword id="KW-0503">Monooxygenase</keyword>
<keyword id="KW-0560">Oxidoreductase</keyword>
<keyword id="KW-1185">Reference proteome</keyword>
<keyword id="KW-0735">Signal-anchor</keyword>
<keyword id="KW-0812">Transmembrane</keyword>
<keyword id="KW-1133">Transmembrane helix</keyword>
<accession>Q9XHC6</accession>
<accession>Q1JV37</accession>
<comment type="function">
    <text evidence="3">Heme-containing cytochrome P450 involved in the biosynthesis of soyasaponins. Hydroxylates specifically the C-24 methyl group of the triterpenes beta-amyrin and sophoradiol. No activity with lupeol, butyrospermol, tirucalla-7,21-dien-3beta-ol, taraxasterol, psi-taraxasterol, bauerenol, alpha-amyrin and multiflorenol as substrates.</text>
</comment>
<comment type="catalytic activity">
    <reaction evidence="3">
        <text>beta-amyrin + reduced [NADPH--hemoprotein reductase] + O2 = 24-hydroxy-beta-amyrin + oxidized [NADPH--hemoprotein reductase] + H2O + H(+)</text>
        <dbReference type="Rhea" id="RHEA:30991"/>
        <dbReference type="Rhea" id="RHEA-COMP:11964"/>
        <dbReference type="Rhea" id="RHEA-COMP:11965"/>
        <dbReference type="ChEBI" id="CHEBI:10352"/>
        <dbReference type="ChEBI" id="CHEBI:15377"/>
        <dbReference type="ChEBI" id="CHEBI:15378"/>
        <dbReference type="ChEBI" id="CHEBI:15379"/>
        <dbReference type="ChEBI" id="CHEBI:57618"/>
        <dbReference type="ChEBI" id="CHEBI:58210"/>
        <dbReference type="ChEBI" id="CHEBI:62459"/>
        <dbReference type="EC" id="1.14.14.134"/>
    </reaction>
</comment>
<comment type="catalytic activity">
    <reaction evidence="3">
        <text>sophoradiol + reduced [NADPH--hemoprotein reductase] + O2 = soyasapogenol B + oxidized [NADPH--hemoprotein reductase] + H2O + H(+)</text>
        <dbReference type="Rhea" id="RHEA:30995"/>
        <dbReference type="Rhea" id="RHEA-COMP:11964"/>
        <dbReference type="Rhea" id="RHEA-COMP:11965"/>
        <dbReference type="ChEBI" id="CHEBI:9209"/>
        <dbReference type="ChEBI" id="CHEBI:15377"/>
        <dbReference type="ChEBI" id="CHEBI:15378"/>
        <dbReference type="ChEBI" id="CHEBI:15379"/>
        <dbReference type="ChEBI" id="CHEBI:57618"/>
        <dbReference type="ChEBI" id="CHEBI:58210"/>
        <dbReference type="ChEBI" id="CHEBI:62458"/>
        <dbReference type="EC" id="1.14.14.134"/>
    </reaction>
</comment>
<comment type="cofactor">
    <cofactor evidence="1">
        <name>heme</name>
        <dbReference type="ChEBI" id="CHEBI:30413"/>
    </cofactor>
</comment>
<comment type="subcellular location">
    <subcellularLocation>
        <location evidence="4">Membrane</location>
        <topology evidence="4">Single-pass membrane protein</topology>
    </subcellularLocation>
</comment>
<comment type="similarity">
    <text evidence="4">Belongs to the cytochrome P450 family.</text>
</comment>
<dbReference type="EC" id="1.14.14.134" evidence="3"/>
<dbReference type="EMBL" id="AF135485">
    <property type="protein sequence ID" value="AAD38930.1"/>
    <property type="molecule type" value="mRNA"/>
</dbReference>
<dbReference type="EMBL" id="AB231332">
    <property type="protein sequence ID" value="BAE94181.1"/>
    <property type="molecule type" value="mRNA"/>
</dbReference>
<dbReference type="RefSeq" id="NP_001236154.2">
    <property type="nucleotide sequence ID" value="NM_001249225.2"/>
</dbReference>
<dbReference type="SMR" id="Q9XHC6"/>
<dbReference type="STRING" id="3847.Q9XHC6"/>
<dbReference type="PaxDb" id="3847-GLYMA08G46520.1"/>
<dbReference type="EnsemblPlants" id="KRH46682">
    <property type="protein sequence ID" value="KRH46682"/>
    <property type="gene ID" value="GLYMA_08G350800"/>
</dbReference>
<dbReference type="GeneID" id="100037459"/>
<dbReference type="Gramene" id="KRH46682">
    <property type="protein sequence ID" value="KRH46682"/>
    <property type="gene ID" value="GLYMA_08G350800"/>
</dbReference>
<dbReference type="KEGG" id="gmx:100037459"/>
<dbReference type="eggNOG" id="KOG0156">
    <property type="taxonomic scope" value="Eukaryota"/>
</dbReference>
<dbReference type="HOGENOM" id="CLU_001570_4_0_1"/>
<dbReference type="InParanoid" id="Q9XHC6"/>
<dbReference type="OMA" id="FALDMFI"/>
<dbReference type="OrthoDB" id="1103324at2759"/>
<dbReference type="BRENDA" id="1.14.14.134">
    <property type="organism ID" value="2483"/>
</dbReference>
<dbReference type="Proteomes" id="UP000008827">
    <property type="component" value="Chromosome 8"/>
</dbReference>
<dbReference type="GO" id="GO:0016020">
    <property type="term" value="C:membrane"/>
    <property type="evidence" value="ECO:0000318"/>
    <property type="project" value="GO_Central"/>
</dbReference>
<dbReference type="GO" id="GO:0020037">
    <property type="term" value="F:heme binding"/>
    <property type="evidence" value="ECO:0007669"/>
    <property type="project" value="InterPro"/>
</dbReference>
<dbReference type="GO" id="GO:0005506">
    <property type="term" value="F:iron ion binding"/>
    <property type="evidence" value="ECO:0007669"/>
    <property type="project" value="InterPro"/>
</dbReference>
<dbReference type="GO" id="GO:0016709">
    <property type="term" value="F:oxidoreductase activity, acting on paired donors, with incorporation or reduction of molecular oxygen, NAD(P)H as one donor, and incorporation of one atom of oxygen"/>
    <property type="evidence" value="ECO:0000318"/>
    <property type="project" value="GO_Central"/>
</dbReference>
<dbReference type="CDD" id="cd20655">
    <property type="entry name" value="CYP93"/>
    <property type="match status" value="1"/>
</dbReference>
<dbReference type="FunFam" id="1.10.630.10:FF:000019">
    <property type="entry name" value="Cytochrome P450 family protein"/>
    <property type="match status" value="1"/>
</dbReference>
<dbReference type="Gene3D" id="1.10.630.10">
    <property type="entry name" value="Cytochrome P450"/>
    <property type="match status" value="1"/>
</dbReference>
<dbReference type="InterPro" id="IPR001128">
    <property type="entry name" value="Cyt_P450"/>
</dbReference>
<dbReference type="InterPro" id="IPR017972">
    <property type="entry name" value="Cyt_P450_CS"/>
</dbReference>
<dbReference type="InterPro" id="IPR002401">
    <property type="entry name" value="Cyt_P450_E_grp-I"/>
</dbReference>
<dbReference type="InterPro" id="IPR036396">
    <property type="entry name" value="Cyt_P450_sf"/>
</dbReference>
<dbReference type="PANTHER" id="PTHR47944:SF17">
    <property type="entry name" value="3,9-DIHYDROXYPTEROCARPAN 6A-MONOOXYGENASE"/>
    <property type="match status" value="1"/>
</dbReference>
<dbReference type="PANTHER" id="PTHR47944">
    <property type="entry name" value="CYTOCHROME P450 98A9"/>
    <property type="match status" value="1"/>
</dbReference>
<dbReference type="Pfam" id="PF00067">
    <property type="entry name" value="p450"/>
    <property type="match status" value="1"/>
</dbReference>
<dbReference type="PRINTS" id="PR00463">
    <property type="entry name" value="EP450I"/>
</dbReference>
<dbReference type="PRINTS" id="PR00385">
    <property type="entry name" value="P450"/>
</dbReference>
<dbReference type="SUPFAM" id="SSF48264">
    <property type="entry name" value="Cytochrome P450"/>
    <property type="match status" value="1"/>
</dbReference>
<dbReference type="PROSITE" id="PS00086">
    <property type="entry name" value="CYTOCHROME_P450"/>
    <property type="match status" value="1"/>
</dbReference>
<name>C93E1_SOYBN</name>